<proteinExistence type="evidence at transcript level"/>
<name>Y1209_ORYSJ</name>
<sequence>MDVSRIRFFRLMTGDFAHGISIPEKVAEIFSGQITKGFNLKSPSGETWRVGVAKVADELILKSGWEDFAKAHELQENDLLFFTCNGHGNGSCSFDVLIFDASGCEKVSCFFTGKKNSYMCKNFNSIGGQVAGQYLSSDSEDTSTPSVLIGSPHKASTSKKLSGKTKTNPRKEPEDPNCSHWHVIEEKNTDDDEHADYHYTRFANYLTGEERDEIFSLVSLQPGNPVFVVVLQTAHVRRRNILIVPTRFAADHLERKSHDILLIRPNRKQKWSVKYYYLSNTTRGFNCHRWIKFIRENRLREGNVCIFELMKGARRPTMTVHVIGKADNRFVLLG</sequence>
<comment type="subcellular location">
    <subcellularLocation>
        <location evidence="1">Nucleus</location>
    </subcellularLocation>
</comment>
<gene>
    <name type="ordered locus">Os12g0591500</name>
    <name type="ordered locus">LOC_Os12g40090</name>
    <name type="ORF">OsJ_36712</name>
</gene>
<reference key="1">
    <citation type="journal article" date="2005" name="BMC Biol.">
        <title>The sequence of rice chromosomes 11 and 12, rich in disease resistance genes and recent gene duplications.</title>
        <authorList>
            <consortium name="The rice chromosomes 11 and 12 sequencing consortia"/>
        </authorList>
    </citation>
    <scope>NUCLEOTIDE SEQUENCE [LARGE SCALE GENOMIC DNA]</scope>
    <source>
        <strain>cv. Nipponbare</strain>
    </source>
</reference>
<reference key="2">
    <citation type="journal article" date="2005" name="Nature">
        <title>The map-based sequence of the rice genome.</title>
        <authorList>
            <consortium name="International rice genome sequencing project (IRGSP)"/>
        </authorList>
    </citation>
    <scope>NUCLEOTIDE SEQUENCE [LARGE SCALE GENOMIC DNA]</scope>
    <source>
        <strain>cv. Nipponbare</strain>
    </source>
</reference>
<reference key="3">
    <citation type="journal article" date="2008" name="Nucleic Acids Res.">
        <title>The rice annotation project database (RAP-DB): 2008 update.</title>
        <authorList>
            <consortium name="The rice annotation project (RAP)"/>
        </authorList>
    </citation>
    <scope>GENOME REANNOTATION</scope>
    <source>
        <strain>cv. Nipponbare</strain>
    </source>
</reference>
<reference key="4">
    <citation type="journal article" date="2013" name="Rice">
        <title>Improvement of the Oryza sativa Nipponbare reference genome using next generation sequence and optical map data.</title>
        <authorList>
            <person name="Kawahara Y."/>
            <person name="de la Bastide M."/>
            <person name="Hamilton J.P."/>
            <person name="Kanamori H."/>
            <person name="McCombie W.R."/>
            <person name="Ouyang S."/>
            <person name="Schwartz D.C."/>
            <person name="Tanaka T."/>
            <person name="Wu J."/>
            <person name="Zhou S."/>
            <person name="Childs K.L."/>
            <person name="Davidson R.M."/>
            <person name="Lin H."/>
            <person name="Quesada-Ocampo L."/>
            <person name="Vaillancourt B."/>
            <person name="Sakai H."/>
            <person name="Lee S.S."/>
            <person name="Kim J."/>
            <person name="Numa H."/>
            <person name="Itoh T."/>
            <person name="Buell C.R."/>
            <person name="Matsumoto T."/>
        </authorList>
    </citation>
    <scope>GENOME REANNOTATION</scope>
    <source>
        <strain>cv. Nipponbare</strain>
    </source>
</reference>
<reference key="5">
    <citation type="journal article" date="2005" name="PLoS Biol.">
        <title>The genomes of Oryza sativa: a history of duplications.</title>
        <authorList>
            <person name="Yu J."/>
            <person name="Wang J."/>
            <person name="Lin W."/>
            <person name="Li S."/>
            <person name="Li H."/>
            <person name="Zhou J."/>
            <person name="Ni P."/>
            <person name="Dong W."/>
            <person name="Hu S."/>
            <person name="Zeng C."/>
            <person name="Zhang J."/>
            <person name="Zhang Y."/>
            <person name="Li R."/>
            <person name="Xu Z."/>
            <person name="Li S."/>
            <person name="Li X."/>
            <person name="Zheng H."/>
            <person name="Cong L."/>
            <person name="Lin L."/>
            <person name="Yin J."/>
            <person name="Geng J."/>
            <person name="Li G."/>
            <person name="Shi J."/>
            <person name="Liu J."/>
            <person name="Lv H."/>
            <person name="Li J."/>
            <person name="Wang J."/>
            <person name="Deng Y."/>
            <person name="Ran L."/>
            <person name="Shi X."/>
            <person name="Wang X."/>
            <person name="Wu Q."/>
            <person name="Li C."/>
            <person name="Ren X."/>
            <person name="Wang J."/>
            <person name="Wang X."/>
            <person name="Li D."/>
            <person name="Liu D."/>
            <person name="Zhang X."/>
            <person name="Ji Z."/>
            <person name="Zhao W."/>
            <person name="Sun Y."/>
            <person name="Zhang Z."/>
            <person name="Bao J."/>
            <person name="Han Y."/>
            <person name="Dong L."/>
            <person name="Ji J."/>
            <person name="Chen P."/>
            <person name="Wu S."/>
            <person name="Liu J."/>
            <person name="Xiao Y."/>
            <person name="Bu D."/>
            <person name="Tan J."/>
            <person name="Yang L."/>
            <person name="Ye C."/>
            <person name="Zhang J."/>
            <person name="Xu J."/>
            <person name="Zhou Y."/>
            <person name="Yu Y."/>
            <person name="Zhang B."/>
            <person name="Zhuang S."/>
            <person name="Wei H."/>
            <person name="Liu B."/>
            <person name="Lei M."/>
            <person name="Yu H."/>
            <person name="Li Y."/>
            <person name="Xu H."/>
            <person name="Wei S."/>
            <person name="He X."/>
            <person name="Fang L."/>
            <person name="Zhang Z."/>
            <person name="Zhang Y."/>
            <person name="Huang X."/>
            <person name="Su Z."/>
            <person name="Tong W."/>
            <person name="Li J."/>
            <person name="Tong Z."/>
            <person name="Li S."/>
            <person name="Ye J."/>
            <person name="Wang L."/>
            <person name="Fang L."/>
            <person name="Lei T."/>
            <person name="Chen C.-S."/>
            <person name="Chen H.-C."/>
            <person name="Xu Z."/>
            <person name="Li H."/>
            <person name="Huang H."/>
            <person name="Zhang F."/>
            <person name="Xu H."/>
            <person name="Li N."/>
            <person name="Zhao C."/>
            <person name="Li S."/>
            <person name="Dong L."/>
            <person name="Huang Y."/>
            <person name="Li L."/>
            <person name="Xi Y."/>
            <person name="Qi Q."/>
            <person name="Li W."/>
            <person name="Zhang B."/>
            <person name="Hu W."/>
            <person name="Zhang Y."/>
            <person name="Tian X."/>
            <person name="Jiao Y."/>
            <person name="Liang X."/>
            <person name="Jin J."/>
            <person name="Gao L."/>
            <person name="Zheng W."/>
            <person name="Hao B."/>
            <person name="Liu S.-M."/>
            <person name="Wang W."/>
            <person name="Yuan L."/>
            <person name="Cao M."/>
            <person name="McDermott J."/>
            <person name="Samudrala R."/>
            <person name="Wang J."/>
            <person name="Wong G.K.-S."/>
            <person name="Yang H."/>
        </authorList>
    </citation>
    <scope>NUCLEOTIDE SEQUENCE [LARGE SCALE GENOMIC DNA]</scope>
    <source>
        <strain>cv. Nipponbare</strain>
    </source>
</reference>
<dbReference type="EMBL" id="DP000011">
    <property type="protein sequence ID" value="ABA99156.1"/>
    <property type="molecule type" value="Genomic_DNA"/>
</dbReference>
<dbReference type="EMBL" id="AP008218">
    <property type="status" value="NOT_ANNOTATED_CDS"/>
    <property type="molecule type" value="Genomic_DNA"/>
</dbReference>
<dbReference type="EMBL" id="AP014968">
    <property type="status" value="NOT_ANNOTATED_CDS"/>
    <property type="molecule type" value="Genomic_DNA"/>
</dbReference>
<dbReference type="EMBL" id="CM000149">
    <property type="protein sequence ID" value="EAZ21069.1"/>
    <property type="molecule type" value="Genomic_DNA"/>
</dbReference>
<dbReference type="SMR" id="Q2QMT5"/>
<dbReference type="FunCoup" id="Q2QMT5">
    <property type="interactions" value="1"/>
</dbReference>
<dbReference type="STRING" id="39947.Q2QMT5"/>
<dbReference type="PaxDb" id="39947-Q2QMT5"/>
<dbReference type="InParanoid" id="Q2QMT5"/>
<dbReference type="Proteomes" id="UP000000763">
    <property type="component" value="Chromosome 12"/>
</dbReference>
<dbReference type="Proteomes" id="UP000007752">
    <property type="component" value="Chromosome 12"/>
</dbReference>
<dbReference type="Proteomes" id="UP000059680">
    <property type="component" value="Chromosome 12"/>
</dbReference>
<dbReference type="GO" id="GO:0005634">
    <property type="term" value="C:nucleus"/>
    <property type="evidence" value="ECO:0007669"/>
    <property type="project" value="UniProtKB-SubCell"/>
</dbReference>
<dbReference type="GO" id="GO:0003677">
    <property type="term" value="F:DNA binding"/>
    <property type="evidence" value="ECO:0007669"/>
    <property type="project" value="UniProtKB-KW"/>
</dbReference>
<dbReference type="CDD" id="cd10017">
    <property type="entry name" value="B3_DNA"/>
    <property type="match status" value="2"/>
</dbReference>
<dbReference type="Gene3D" id="2.40.330.10">
    <property type="entry name" value="DNA-binding pseudobarrel domain"/>
    <property type="match status" value="2"/>
</dbReference>
<dbReference type="InterPro" id="IPR003340">
    <property type="entry name" value="B3_DNA-bd"/>
</dbReference>
<dbReference type="InterPro" id="IPR015300">
    <property type="entry name" value="DNA-bd_pseudobarrel_sf"/>
</dbReference>
<dbReference type="InterPro" id="IPR044837">
    <property type="entry name" value="REM16-like"/>
</dbReference>
<dbReference type="PANTHER" id="PTHR31391:SF70">
    <property type="entry name" value="B3 DOMAIN-CONTAINING PROTEIN OS03G0622200"/>
    <property type="match status" value="1"/>
</dbReference>
<dbReference type="PANTHER" id="PTHR31391">
    <property type="entry name" value="B3 DOMAIN-CONTAINING PROTEIN OS11G0197600-RELATED"/>
    <property type="match status" value="1"/>
</dbReference>
<dbReference type="Pfam" id="PF02362">
    <property type="entry name" value="B3"/>
    <property type="match status" value="2"/>
</dbReference>
<dbReference type="SMART" id="SM01019">
    <property type="entry name" value="B3"/>
    <property type="match status" value="2"/>
</dbReference>
<dbReference type="SUPFAM" id="SSF101936">
    <property type="entry name" value="DNA-binding pseudobarrel domain"/>
    <property type="match status" value="2"/>
</dbReference>
<dbReference type="PROSITE" id="PS50863">
    <property type="entry name" value="B3"/>
    <property type="match status" value="2"/>
</dbReference>
<feature type="chain" id="PRO_0000376992" description="B3 domain-containing protein LOC_Os12g40090">
    <location>
        <begin position="1"/>
        <end position="334"/>
    </location>
</feature>
<feature type="DNA-binding region" description="TF-B3 1" evidence="1">
    <location>
        <begin position="5"/>
        <end position="102"/>
    </location>
</feature>
<feature type="DNA-binding region" description="TF-B3 2" evidence="1">
    <location>
        <begin position="227"/>
        <end position="326"/>
    </location>
</feature>
<feature type="region of interest" description="Disordered" evidence="2">
    <location>
        <begin position="142"/>
        <end position="178"/>
    </location>
</feature>
<feature type="compositionally biased region" description="Low complexity" evidence="2">
    <location>
        <begin position="154"/>
        <end position="166"/>
    </location>
</feature>
<protein>
    <recommendedName>
        <fullName>B3 domain-containing protein LOC_Os12g40090</fullName>
    </recommendedName>
</protein>
<evidence type="ECO:0000255" key="1">
    <source>
        <dbReference type="PROSITE-ProRule" id="PRU00326"/>
    </source>
</evidence>
<evidence type="ECO:0000256" key="2">
    <source>
        <dbReference type="SAM" id="MobiDB-lite"/>
    </source>
</evidence>
<accession>Q2QMT5</accession>
<keyword id="KW-0238">DNA-binding</keyword>
<keyword id="KW-0539">Nucleus</keyword>
<keyword id="KW-1185">Reference proteome</keyword>
<keyword id="KW-0677">Repeat</keyword>
<keyword id="KW-0804">Transcription</keyword>
<keyword id="KW-0805">Transcription regulation</keyword>
<organism>
    <name type="scientific">Oryza sativa subsp. japonica</name>
    <name type="common">Rice</name>
    <dbReference type="NCBI Taxonomy" id="39947"/>
    <lineage>
        <taxon>Eukaryota</taxon>
        <taxon>Viridiplantae</taxon>
        <taxon>Streptophyta</taxon>
        <taxon>Embryophyta</taxon>
        <taxon>Tracheophyta</taxon>
        <taxon>Spermatophyta</taxon>
        <taxon>Magnoliopsida</taxon>
        <taxon>Liliopsida</taxon>
        <taxon>Poales</taxon>
        <taxon>Poaceae</taxon>
        <taxon>BOP clade</taxon>
        <taxon>Oryzoideae</taxon>
        <taxon>Oryzeae</taxon>
        <taxon>Oryzinae</taxon>
        <taxon>Oryza</taxon>
        <taxon>Oryza sativa</taxon>
    </lineage>
</organism>